<dbReference type="EC" id="7.1.1.-" evidence="1"/>
<dbReference type="EMBL" id="CP000031">
    <property type="protein sequence ID" value="AAV96025.1"/>
    <property type="molecule type" value="Genomic_DNA"/>
</dbReference>
<dbReference type="RefSeq" id="WP_011048483.1">
    <property type="nucleotide sequence ID" value="NC_003911.12"/>
</dbReference>
<dbReference type="SMR" id="Q5LPR5"/>
<dbReference type="STRING" id="246200.SPO2784"/>
<dbReference type="PaxDb" id="246200-SPO2784"/>
<dbReference type="KEGG" id="sil:SPO2784"/>
<dbReference type="eggNOG" id="COG0852">
    <property type="taxonomic scope" value="Bacteria"/>
</dbReference>
<dbReference type="HOGENOM" id="CLU_042628_2_1_5"/>
<dbReference type="OrthoDB" id="9803286at2"/>
<dbReference type="Proteomes" id="UP000001023">
    <property type="component" value="Chromosome"/>
</dbReference>
<dbReference type="GO" id="GO:0005886">
    <property type="term" value="C:plasma membrane"/>
    <property type="evidence" value="ECO:0007669"/>
    <property type="project" value="UniProtKB-SubCell"/>
</dbReference>
<dbReference type="GO" id="GO:0008137">
    <property type="term" value="F:NADH dehydrogenase (ubiquinone) activity"/>
    <property type="evidence" value="ECO:0007669"/>
    <property type="project" value="InterPro"/>
</dbReference>
<dbReference type="GO" id="GO:0050136">
    <property type="term" value="F:NADH:ubiquinone reductase (non-electrogenic) activity"/>
    <property type="evidence" value="ECO:0007669"/>
    <property type="project" value="UniProtKB-UniRule"/>
</dbReference>
<dbReference type="GO" id="GO:0048038">
    <property type="term" value="F:quinone binding"/>
    <property type="evidence" value="ECO:0007669"/>
    <property type="project" value="UniProtKB-KW"/>
</dbReference>
<dbReference type="Gene3D" id="3.30.460.80">
    <property type="entry name" value="NADH:ubiquinone oxidoreductase, 30kDa subunit"/>
    <property type="match status" value="1"/>
</dbReference>
<dbReference type="HAMAP" id="MF_01357">
    <property type="entry name" value="NDH1_NuoC"/>
    <property type="match status" value="1"/>
</dbReference>
<dbReference type="InterPro" id="IPR010218">
    <property type="entry name" value="NADH_DH_suC"/>
</dbReference>
<dbReference type="InterPro" id="IPR037232">
    <property type="entry name" value="NADH_quin_OxRdtase_su_C/D-like"/>
</dbReference>
<dbReference type="InterPro" id="IPR001268">
    <property type="entry name" value="NADH_UbQ_OxRdtase_30kDa_su"/>
</dbReference>
<dbReference type="InterPro" id="IPR020396">
    <property type="entry name" value="NADH_UbQ_OxRdtase_CS"/>
</dbReference>
<dbReference type="NCBIfam" id="TIGR01961">
    <property type="entry name" value="NuoC_fam"/>
    <property type="match status" value="1"/>
</dbReference>
<dbReference type="NCBIfam" id="NF004733">
    <property type="entry name" value="PRK06074.1-5"/>
    <property type="match status" value="1"/>
</dbReference>
<dbReference type="PANTHER" id="PTHR10884:SF14">
    <property type="entry name" value="NADH DEHYDROGENASE [UBIQUINONE] IRON-SULFUR PROTEIN 3, MITOCHONDRIAL"/>
    <property type="match status" value="1"/>
</dbReference>
<dbReference type="PANTHER" id="PTHR10884">
    <property type="entry name" value="NADH DEHYDROGENASE UBIQUINONE IRON-SULFUR PROTEIN 3"/>
    <property type="match status" value="1"/>
</dbReference>
<dbReference type="Pfam" id="PF00329">
    <property type="entry name" value="Complex1_30kDa"/>
    <property type="match status" value="1"/>
</dbReference>
<dbReference type="SUPFAM" id="SSF143243">
    <property type="entry name" value="Nqo5-like"/>
    <property type="match status" value="1"/>
</dbReference>
<dbReference type="PROSITE" id="PS00542">
    <property type="entry name" value="COMPLEX1_30K"/>
    <property type="match status" value="1"/>
</dbReference>
<sequence>MSDALRELGTHLELKRADCILSWDVTFGELNVDVAPSNLVDFVDFLRSDSSCRFSTLVDITAVDYPERAKRFDVVYHFLSMYQNQRIRLRVSIREDDMVPSITDVHPSANWFEREVFDMFGILFTGHPDLRRILTDYGFRGYPLRKDFPTTGYTEVRYDEAEKRVVYEPVSLVQEYRQFDFMSPWEGADYILPGDEKKEG</sequence>
<feature type="chain" id="PRO_0000358197" description="NADH-quinone oxidoreductase subunit C">
    <location>
        <begin position="1"/>
        <end position="200"/>
    </location>
</feature>
<reference key="1">
    <citation type="journal article" date="2004" name="Nature">
        <title>Genome sequence of Silicibacter pomeroyi reveals adaptations to the marine environment.</title>
        <authorList>
            <person name="Moran M.A."/>
            <person name="Buchan A."/>
            <person name="Gonzalez J.M."/>
            <person name="Heidelberg J.F."/>
            <person name="Whitman W.B."/>
            <person name="Kiene R.P."/>
            <person name="Henriksen J.R."/>
            <person name="King G.M."/>
            <person name="Belas R."/>
            <person name="Fuqua C."/>
            <person name="Brinkac L.M."/>
            <person name="Lewis M."/>
            <person name="Johri S."/>
            <person name="Weaver B."/>
            <person name="Pai G."/>
            <person name="Eisen J.A."/>
            <person name="Rahe E."/>
            <person name="Sheldon W.M."/>
            <person name="Ye W."/>
            <person name="Miller T.R."/>
            <person name="Carlton J."/>
            <person name="Rasko D.A."/>
            <person name="Paulsen I.T."/>
            <person name="Ren Q."/>
            <person name="Daugherty S.C."/>
            <person name="DeBoy R.T."/>
            <person name="Dodson R.J."/>
            <person name="Durkin A.S."/>
            <person name="Madupu R."/>
            <person name="Nelson W.C."/>
            <person name="Sullivan S.A."/>
            <person name="Rosovitz M.J."/>
            <person name="Haft D.H."/>
            <person name="Selengut J."/>
            <person name="Ward N."/>
        </authorList>
    </citation>
    <scope>NUCLEOTIDE SEQUENCE [LARGE SCALE GENOMIC DNA]</scope>
    <source>
        <strain>ATCC 700808 / DSM 15171 / DSS-3</strain>
    </source>
</reference>
<reference key="2">
    <citation type="journal article" date="2014" name="Stand. Genomic Sci.">
        <title>An updated genome annotation for the model marine bacterium Ruegeria pomeroyi DSS-3.</title>
        <authorList>
            <person name="Rivers A.R."/>
            <person name="Smith C.B."/>
            <person name="Moran M.A."/>
        </authorList>
    </citation>
    <scope>GENOME REANNOTATION</scope>
    <source>
        <strain>ATCC 700808 / DSM 15171 / DSS-3</strain>
    </source>
</reference>
<gene>
    <name evidence="1" type="primary">nuoC</name>
    <name type="ordered locus">SPO2784</name>
</gene>
<comment type="function">
    <text evidence="1">NDH-1 shuttles electrons from NADH, via FMN and iron-sulfur (Fe-S) centers, to quinones in the respiratory chain. The immediate electron acceptor for the enzyme in this species is believed to be ubiquinone. Couples the redox reaction to proton translocation (for every two electrons transferred, four hydrogen ions are translocated across the cytoplasmic membrane), and thus conserves the redox energy in a proton gradient.</text>
</comment>
<comment type="catalytic activity">
    <reaction evidence="1">
        <text>a quinone + NADH + 5 H(+)(in) = a quinol + NAD(+) + 4 H(+)(out)</text>
        <dbReference type="Rhea" id="RHEA:57888"/>
        <dbReference type="ChEBI" id="CHEBI:15378"/>
        <dbReference type="ChEBI" id="CHEBI:24646"/>
        <dbReference type="ChEBI" id="CHEBI:57540"/>
        <dbReference type="ChEBI" id="CHEBI:57945"/>
        <dbReference type="ChEBI" id="CHEBI:132124"/>
    </reaction>
</comment>
<comment type="subunit">
    <text evidence="1">NDH-1 is composed of 14 different subunits. Subunits NuoB, C, D, E, F, and G constitute the peripheral sector of the complex.</text>
</comment>
<comment type="subcellular location">
    <subcellularLocation>
        <location evidence="1">Cell inner membrane</location>
        <topology evidence="1">Peripheral membrane protein</topology>
        <orientation evidence="1">Cytoplasmic side</orientation>
    </subcellularLocation>
</comment>
<comment type="similarity">
    <text evidence="1">Belongs to the complex I 30 kDa subunit family.</text>
</comment>
<evidence type="ECO:0000255" key="1">
    <source>
        <dbReference type="HAMAP-Rule" id="MF_01357"/>
    </source>
</evidence>
<protein>
    <recommendedName>
        <fullName evidence="1">NADH-quinone oxidoreductase subunit C</fullName>
        <ecNumber evidence="1">7.1.1.-</ecNumber>
    </recommendedName>
    <alternativeName>
        <fullName evidence="1">NADH dehydrogenase I subunit C</fullName>
    </alternativeName>
    <alternativeName>
        <fullName evidence="1">NDH-1 subunit C</fullName>
    </alternativeName>
</protein>
<organism>
    <name type="scientific">Ruegeria pomeroyi (strain ATCC 700808 / DSM 15171 / DSS-3)</name>
    <name type="common">Silicibacter pomeroyi</name>
    <dbReference type="NCBI Taxonomy" id="246200"/>
    <lineage>
        <taxon>Bacteria</taxon>
        <taxon>Pseudomonadati</taxon>
        <taxon>Pseudomonadota</taxon>
        <taxon>Alphaproteobacteria</taxon>
        <taxon>Rhodobacterales</taxon>
        <taxon>Roseobacteraceae</taxon>
        <taxon>Ruegeria</taxon>
    </lineage>
</organism>
<proteinExistence type="inferred from homology"/>
<keyword id="KW-0997">Cell inner membrane</keyword>
<keyword id="KW-1003">Cell membrane</keyword>
<keyword id="KW-0472">Membrane</keyword>
<keyword id="KW-0520">NAD</keyword>
<keyword id="KW-0874">Quinone</keyword>
<keyword id="KW-1185">Reference proteome</keyword>
<keyword id="KW-1278">Translocase</keyword>
<keyword id="KW-0813">Transport</keyword>
<keyword id="KW-0830">Ubiquinone</keyword>
<accession>Q5LPR5</accession>
<name>NUOC_RUEPO</name>